<sequence>MKNVTVKSLAVEMQISVDHLVQQFSNVGFHKTARDYVTQQEKETLLAYLKYELSNTPLTLQRKTRSTLNIASTSGRSKSVQVEVRKKHIYIQPVAHDSILTIKENILPNNTQEVKNNAEASPKTKFILTPKQQSKIAKNNIVNNQNNLIKKSRQISEKAILEAKAAELKHQAEEETRRKVEEKARQIAEEARQFAEHNDSIWMTTPELAEDDTIDDNLSNYHYASIVEDENNRKIENERRTRGNKVSKQKTYRLSEFKKNREEARAVGRSSKSQSKRKSSTLMQVFNKPSQVINRDIVIGEMITVAELANKMAVKGSQIIKKLIQLGVMATINQIIDRETAQLVAEDMGHKVILLRENELEESIMKDRKIDSSVDNAESRAPVVTIMGHVDHGKTSLLDYIRSTKVVASEAGGITQHIGAYHVETDRGMITFLDTPGHAAFTAMRARGARTTDIVVLVVAADNGAMPQTIEAIQHAKAAKVPIVVAVNKIDKKEANPENIKNELTKHGIIPEEWGGQNQFVNISAKYGTGINNLLDAILLQAEVLELKAIRNGIASGIVIESFLDKGRGPVATILVREGTLHHGDMILCGLEYGRVRAMRDEQGRHLSTAGPSVPVEILGLSGVPIAGDEAMVVRDEKKAREVALYRQGKFREGKLARKHSAKLENMFTNISEGGILELNIILKTDVQGSVEAINDALEQLSTEKAKVKIIGSGVGGITETDATLAAASNAILIGFNVRADASARRIIDKENLNIHYYSVIYHLINEVTQAMNGMLTPEYKQDIIGLAEVRNVFSVPKFGLIAGCMVIEGIVKRHNNIRVIRNNIIIYEGELYSLRRFKDDVNEVRNGMECGIGVKNYTDIRTGDIIEVFKLIPIIKSSN</sequence>
<organism>
    <name type="scientific">Baumannia cicadellinicola subsp. Homalodisca coagulata</name>
    <dbReference type="NCBI Taxonomy" id="374463"/>
    <lineage>
        <taxon>Bacteria</taxon>
        <taxon>Pseudomonadati</taxon>
        <taxon>Pseudomonadota</taxon>
        <taxon>Gammaproteobacteria</taxon>
        <taxon>Candidatus Palibaumannia</taxon>
    </lineage>
</organism>
<feature type="chain" id="PRO_1000008202" description="Translation initiation factor IF-2">
    <location>
        <begin position="1"/>
        <end position="880"/>
    </location>
</feature>
<feature type="domain" description="tr-type G">
    <location>
        <begin position="379"/>
        <end position="548"/>
    </location>
</feature>
<feature type="region of interest" description="Disordered" evidence="3">
    <location>
        <begin position="259"/>
        <end position="281"/>
    </location>
</feature>
<feature type="region of interest" description="G1" evidence="1">
    <location>
        <begin position="388"/>
        <end position="395"/>
    </location>
</feature>
<feature type="region of interest" description="G2" evidence="1">
    <location>
        <begin position="413"/>
        <end position="417"/>
    </location>
</feature>
<feature type="region of interest" description="G3" evidence="1">
    <location>
        <begin position="434"/>
        <end position="437"/>
    </location>
</feature>
<feature type="region of interest" description="G4" evidence="1">
    <location>
        <begin position="488"/>
        <end position="491"/>
    </location>
</feature>
<feature type="region of interest" description="G5" evidence="1">
    <location>
        <begin position="524"/>
        <end position="526"/>
    </location>
</feature>
<feature type="binding site" evidence="2">
    <location>
        <begin position="388"/>
        <end position="395"/>
    </location>
    <ligand>
        <name>GTP</name>
        <dbReference type="ChEBI" id="CHEBI:37565"/>
    </ligand>
</feature>
<feature type="binding site" evidence="2">
    <location>
        <begin position="434"/>
        <end position="438"/>
    </location>
    <ligand>
        <name>GTP</name>
        <dbReference type="ChEBI" id="CHEBI:37565"/>
    </ligand>
</feature>
<feature type="binding site" evidence="2">
    <location>
        <begin position="488"/>
        <end position="491"/>
    </location>
    <ligand>
        <name>GTP</name>
        <dbReference type="ChEBI" id="CHEBI:37565"/>
    </ligand>
</feature>
<dbReference type="EMBL" id="CP000238">
    <property type="protein sequence ID" value="ABF14122.1"/>
    <property type="molecule type" value="Genomic_DNA"/>
</dbReference>
<dbReference type="RefSeq" id="WP_011520789.1">
    <property type="nucleotide sequence ID" value="NC_007984.1"/>
</dbReference>
<dbReference type="SMR" id="Q1LSK8"/>
<dbReference type="STRING" id="374463.BCI_0631"/>
<dbReference type="KEGG" id="bci:BCI_0631"/>
<dbReference type="HOGENOM" id="CLU_006301_6_3_6"/>
<dbReference type="OrthoDB" id="9811804at2"/>
<dbReference type="Proteomes" id="UP000002427">
    <property type="component" value="Chromosome"/>
</dbReference>
<dbReference type="GO" id="GO:0005829">
    <property type="term" value="C:cytosol"/>
    <property type="evidence" value="ECO:0007669"/>
    <property type="project" value="TreeGrafter"/>
</dbReference>
<dbReference type="GO" id="GO:0005525">
    <property type="term" value="F:GTP binding"/>
    <property type="evidence" value="ECO:0007669"/>
    <property type="project" value="UniProtKB-KW"/>
</dbReference>
<dbReference type="GO" id="GO:0003924">
    <property type="term" value="F:GTPase activity"/>
    <property type="evidence" value="ECO:0007669"/>
    <property type="project" value="UniProtKB-UniRule"/>
</dbReference>
<dbReference type="GO" id="GO:0097216">
    <property type="term" value="F:guanosine tetraphosphate binding"/>
    <property type="evidence" value="ECO:0007669"/>
    <property type="project" value="UniProtKB-ARBA"/>
</dbReference>
<dbReference type="GO" id="GO:0003743">
    <property type="term" value="F:translation initiation factor activity"/>
    <property type="evidence" value="ECO:0007669"/>
    <property type="project" value="UniProtKB-UniRule"/>
</dbReference>
<dbReference type="CDD" id="cd01887">
    <property type="entry name" value="IF2_eIF5B"/>
    <property type="match status" value="1"/>
</dbReference>
<dbReference type="CDD" id="cd03702">
    <property type="entry name" value="IF2_mtIF2_II"/>
    <property type="match status" value="1"/>
</dbReference>
<dbReference type="CDD" id="cd03692">
    <property type="entry name" value="mtIF2_IVc"/>
    <property type="match status" value="1"/>
</dbReference>
<dbReference type="FunFam" id="2.40.30.10:FF:000007">
    <property type="entry name" value="Translation initiation factor IF-2"/>
    <property type="match status" value="1"/>
</dbReference>
<dbReference type="FunFam" id="2.40.30.10:FF:000008">
    <property type="entry name" value="Translation initiation factor IF-2"/>
    <property type="match status" value="1"/>
</dbReference>
<dbReference type="FunFam" id="3.40.50.10050:FF:000001">
    <property type="entry name" value="Translation initiation factor IF-2"/>
    <property type="match status" value="1"/>
</dbReference>
<dbReference type="FunFam" id="3.40.50.300:FF:000019">
    <property type="entry name" value="Translation initiation factor IF-2"/>
    <property type="match status" value="1"/>
</dbReference>
<dbReference type="Gene3D" id="3.40.50.300">
    <property type="entry name" value="P-loop containing nucleotide triphosphate hydrolases"/>
    <property type="match status" value="1"/>
</dbReference>
<dbReference type="Gene3D" id="3.30.56.50">
    <property type="entry name" value="Putative DNA-binding domain, N-terminal subdomain of bacterial translation initiation factor IF2"/>
    <property type="match status" value="1"/>
</dbReference>
<dbReference type="Gene3D" id="2.40.30.10">
    <property type="entry name" value="Translation factors"/>
    <property type="match status" value="2"/>
</dbReference>
<dbReference type="Gene3D" id="3.40.50.10050">
    <property type="entry name" value="Translation initiation factor IF- 2, domain 3"/>
    <property type="match status" value="1"/>
</dbReference>
<dbReference type="HAMAP" id="MF_00100_B">
    <property type="entry name" value="IF_2_B"/>
    <property type="match status" value="1"/>
</dbReference>
<dbReference type="InterPro" id="IPR009061">
    <property type="entry name" value="DNA-bd_dom_put_sf"/>
</dbReference>
<dbReference type="InterPro" id="IPR053905">
    <property type="entry name" value="EF-G-like_DII"/>
</dbReference>
<dbReference type="InterPro" id="IPR004161">
    <property type="entry name" value="EFTu-like_2"/>
</dbReference>
<dbReference type="InterPro" id="IPR013575">
    <property type="entry name" value="IF2_assoc_dom_bac"/>
</dbReference>
<dbReference type="InterPro" id="IPR044145">
    <property type="entry name" value="IF2_II"/>
</dbReference>
<dbReference type="InterPro" id="IPR006847">
    <property type="entry name" value="IF2_N"/>
</dbReference>
<dbReference type="InterPro" id="IPR027417">
    <property type="entry name" value="P-loop_NTPase"/>
</dbReference>
<dbReference type="InterPro" id="IPR005225">
    <property type="entry name" value="Small_GTP-bd"/>
</dbReference>
<dbReference type="InterPro" id="IPR000795">
    <property type="entry name" value="T_Tr_GTP-bd_dom"/>
</dbReference>
<dbReference type="InterPro" id="IPR000178">
    <property type="entry name" value="TF_IF2_bacterial-like"/>
</dbReference>
<dbReference type="InterPro" id="IPR015760">
    <property type="entry name" value="TIF_IF2"/>
</dbReference>
<dbReference type="InterPro" id="IPR023115">
    <property type="entry name" value="TIF_IF2_dom3"/>
</dbReference>
<dbReference type="InterPro" id="IPR036925">
    <property type="entry name" value="TIF_IF2_dom3_sf"/>
</dbReference>
<dbReference type="InterPro" id="IPR009000">
    <property type="entry name" value="Transl_B-barrel_sf"/>
</dbReference>
<dbReference type="NCBIfam" id="TIGR00487">
    <property type="entry name" value="IF-2"/>
    <property type="match status" value="1"/>
</dbReference>
<dbReference type="NCBIfam" id="TIGR00231">
    <property type="entry name" value="small_GTP"/>
    <property type="match status" value="1"/>
</dbReference>
<dbReference type="PANTHER" id="PTHR43381:SF5">
    <property type="entry name" value="TR-TYPE G DOMAIN-CONTAINING PROTEIN"/>
    <property type="match status" value="1"/>
</dbReference>
<dbReference type="PANTHER" id="PTHR43381">
    <property type="entry name" value="TRANSLATION INITIATION FACTOR IF-2-RELATED"/>
    <property type="match status" value="1"/>
</dbReference>
<dbReference type="Pfam" id="PF22042">
    <property type="entry name" value="EF-G_D2"/>
    <property type="match status" value="1"/>
</dbReference>
<dbReference type="Pfam" id="PF00009">
    <property type="entry name" value="GTP_EFTU"/>
    <property type="match status" value="1"/>
</dbReference>
<dbReference type="Pfam" id="PF03144">
    <property type="entry name" value="GTP_EFTU_D2"/>
    <property type="match status" value="1"/>
</dbReference>
<dbReference type="Pfam" id="PF11987">
    <property type="entry name" value="IF-2"/>
    <property type="match status" value="1"/>
</dbReference>
<dbReference type="Pfam" id="PF08364">
    <property type="entry name" value="IF2_assoc"/>
    <property type="match status" value="1"/>
</dbReference>
<dbReference type="Pfam" id="PF04760">
    <property type="entry name" value="IF2_N"/>
    <property type="match status" value="2"/>
</dbReference>
<dbReference type="SUPFAM" id="SSF52156">
    <property type="entry name" value="Initiation factor IF2/eIF5b, domain 3"/>
    <property type="match status" value="1"/>
</dbReference>
<dbReference type="SUPFAM" id="SSF52540">
    <property type="entry name" value="P-loop containing nucleoside triphosphate hydrolases"/>
    <property type="match status" value="1"/>
</dbReference>
<dbReference type="SUPFAM" id="SSF46955">
    <property type="entry name" value="Putative DNA-binding domain"/>
    <property type="match status" value="1"/>
</dbReference>
<dbReference type="SUPFAM" id="SSF50447">
    <property type="entry name" value="Translation proteins"/>
    <property type="match status" value="2"/>
</dbReference>
<dbReference type="PROSITE" id="PS51722">
    <property type="entry name" value="G_TR_2"/>
    <property type="match status" value="1"/>
</dbReference>
<dbReference type="PROSITE" id="PS01176">
    <property type="entry name" value="IF2"/>
    <property type="match status" value="1"/>
</dbReference>
<gene>
    <name evidence="2" type="primary">infB</name>
    <name type="ordered locus">BCI_0631</name>
</gene>
<protein>
    <recommendedName>
        <fullName evidence="2">Translation initiation factor IF-2</fullName>
    </recommendedName>
</protein>
<reference key="1">
    <citation type="journal article" date="2006" name="PLoS Biol.">
        <title>Metabolic complementarity and genomics of the dual bacterial symbiosis of sharpshooters.</title>
        <authorList>
            <person name="Wu D."/>
            <person name="Daugherty S.C."/>
            <person name="Van Aken S.E."/>
            <person name="Pai G.H."/>
            <person name="Watkins K.L."/>
            <person name="Khouri H."/>
            <person name="Tallon L.J."/>
            <person name="Zaborsky J.M."/>
            <person name="Dunbar H.E."/>
            <person name="Tran P.L."/>
            <person name="Moran N.A."/>
            <person name="Eisen J.A."/>
        </authorList>
    </citation>
    <scope>NUCLEOTIDE SEQUENCE [LARGE SCALE GENOMIC DNA]</scope>
</reference>
<accession>Q1LSK8</accession>
<evidence type="ECO:0000250" key="1"/>
<evidence type="ECO:0000255" key="2">
    <source>
        <dbReference type="HAMAP-Rule" id="MF_00100"/>
    </source>
</evidence>
<evidence type="ECO:0000256" key="3">
    <source>
        <dbReference type="SAM" id="MobiDB-lite"/>
    </source>
</evidence>
<proteinExistence type="inferred from homology"/>
<comment type="function">
    <text evidence="2">One of the essential components for the initiation of protein synthesis. Protects formylmethionyl-tRNA from spontaneous hydrolysis and promotes its binding to the 30S ribosomal subunits. Also involved in the hydrolysis of GTP during the formation of the 70S ribosomal complex.</text>
</comment>
<comment type="subcellular location">
    <subcellularLocation>
        <location evidence="2">Cytoplasm</location>
    </subcellularLocation>
</comment>
<comment type="similarity">
    <text evidence="2">Belongs to the TRAFAC class translation factor GTPase superfamily. Classic translation factor GTPase family. IF-2 subfamily.</text>
</comment>
<keyword id="KW-0963">Cytoplasm</keyword>
<keyword id="KW-0342">GTP-binding</keyword>
<keyword id="KW-0396">Initiation factor</keyword>
<keyword id="KW-0547">Nucleotide-binding</keyword>
<keyword id="KW-0648">Protein biosynthesis</keyword>
<keyword id="KW-1185">Reference proteome</keyword>
<name>IF2_BAUCH</name>